<keyword id="KW-0004">4Fe-4S</keyword>
<keyword id="KW-0408">Iron</keyword>
<keyword id="KW-0411">Iron-sulfur</keyword>
<keyword id="KW-0414">Isoprene biosynthesis</keyword>
<keyword id="KW-0479">Metal-binding</keyword>
<keyword id="KW-0560">Oxidoreductase</keyword>
<keyword id="KW-1185">Reference proteome</keyword>
<accession>Q607E5</accession>
<reference key="1">
    <citation type="journal article" date="2004" name="PLoS Biol.">
        <title>Genomic insights into methanotrophy: the complete genome sequence of Methylococcus capsulatus (Bath).</title>
        <authorList>
            <person name="Ward N.L."/>
            <person name="Larsen O."/>
            <person name="Sakwa J."/>
            <person name="Bruseth L."/>
            <person name="Khouri H.M."/>
            <person name="Durkin A.S."/>
            <person name="Dimitrov G."/>
            <person name="Jiang L."/>
            <person name="Scanlan D."/>
            <person name="Kang K.H."/>
            <person name="Lewis M.R."/>
            <person name="Nelson K.E."/>
            <person name="Methe B.A."/>
            <person name="Wu M."/>
            <person name="Heidelberg J.F."/>
            <person name="Paulsen I.T."/>
            <person name="Fouts D.E."/>
            <person name="Ravel J."/>
            <person name="Tettelin H."/>
            <person name="Ren Q."/>
            <person name="Read T.D."/>
            <person name="DeBoy R.T."/>
            <person name="Seshadri R."/>
            <person name="Salzberg S.L."/>
            <person name="Jensen H.B."/>
            <person name="Birkeland N.K."/>
            <person name="Nelson W.C."/>
            <person name="Dodson R.J."/>
            <person name="Grindhaug S.H."/>
            <person name="Holt I.E."/>
            <person name="Eidhammer I."/>
            <person name="Jonasen I."/>
            <person name="Vanaken S."/>
            <person name="Utterback T.R."/>
            <person name="Feldblyum T.V."/>
            <person name="Fraser C.M."/>
            <person name="Lillehaug J.R."/>
            <person name="Eisen J.A."/>
        </authorList>
    </citation>
    <scope>NUCLEOTIDE SEQUENCE [LARGE SCALE GENOMIC DNA]</scope>
    <source>
        <strain>ATCC 33009 / NCIMB 11132 / Bath</strain>
    </source>
</reference>
<evidence type="ECO:0000255" key="1">
    <source>
        <dbReference type="HAMAP-Rule" id="MF_00191"/>
    </source>
</evidence>
<organism>
    <name type="scientific">Methylococcus capsulatus (strain ATCC 33009 / NCIMB 11132 / Bath)</name>
    <dbReference type="NCBI Taxonomy" id="243233"/>
    <lineage>
        <taxon>Bacteria</taxon>
        <taxon>Pseudomonadati</taxon>
        <taxon>Pseudomonadota</taxon>
        <taxon>Gammaproteobacteria</taxon>
        <taxon>Methylococcales</taxon>
        <taxon>Methylococcaceae</taxon>
        <taxon>Methylococcus</taxon>
    </lineage>
</organism>
<sequence>MEIILANPRGFCAGVDRAIEIVDRAIEVFGAPIYVRHEVVHNRYVVDGLRERGAVFVEELSEVPENSTVIFSAHGVSKQIQEEARERGLQVFDATCPLVTKVHIEVHQHASEGREIVFIGHAGHPEVEGTMGQYDNPAGGIYLVESPEDVEMLQVKNPDNLAYVTQTTLSIDDTGAVVEALKMRFPKILGPRKDDICYATQNRQDAVKKLAAQCDTILVVGSPNSSNSNRLREIADKLGRKAFLIDNAAQLTRDMVAGAQRIGVTAGASAPEILVQQVIAQLKEWGGRTATETQGIEEKVVFSLPKELRRLNA</sequence>
<gene>
    <name evidence="1" type="primary">ispH</name>
    <name type="ordered locus">MCA1815</name>
</gene>
<name>ISPH_METCA</name>
<feature type="chain" id="PRO_0000128835" description="4-hydroxy-3-methylbut-2-enyl diphosphate reductase">
    <location>
        <begin position="1"/>
        <end position="313"/>
    </location>
</feature>
<feature type="active site" description="Proton donor" evidence="1">
    <location>
        <position position="126"/>
    </location>
</feature>
<feature type="binding site" evidence="1">
    <location>
        <position position="12"/>
    </location>
    <ligand>
        <name>[4Fe-4S] cluster</name>
        <dbReference type="ChEBI" id="CHEBI:49883"/>
    </ligand>
</feature>
<feature type="binding site" evidence="1">
    <location>
        <position position="41"/>
    </location>
    <ligand>
        <name>(2E)-4-hydroxy-3-methylbut-2-enyl diphosphate</name>
        <dbReference type="ChEBI" id="CHEBI:128753"/>
    </ligand>
</feature>
<feature type="binding site" evidence="1">
    <location>
        <position position="41"/>
    </location>
    <ligand>
        <name>dimethylallyl diphosphate</name>
        <dbReference type="ChEBI" id="CHEBI:57623"/>
    </ligand>
</feature>
<feature type="binding site" evidence="1">
    <location>
        <position position="41"/>
    </location>
    <ligand>
        <name>isopentenyl diphosphate</name>
        <dbReference type="ChEBI" id="CHEBI:128769"/>
    </ligand>
</feature>
<feature type="binding site" evidence="1">
    <location>
        <position position="74"/>
    </location>
    <ligand>
        <name>(2E)-4-hydroxy-3-methylbut-2-enyl diphosphate</name>
        <dbReference type="ChEBI" id="CHEBI:128753"/>
    </ligand>
</feature>
<feature type="binding site" evidence="1">
    <location>
        <position position="74"/>
    </location>
    <ligand>
        <name>dimethylallyl diphosphate</name>
        <dbReference type="ChEBI" id="CHEBI:57623"/>
    </ligand>
</feature>
<feature type="binding site" evidence="1">
    <location>
        <position position="74"/>
    </location>
    <ligand>
        <name>isopentenyl diphosphate</name>
        <dbReference type="ChEBI" id="CHEBI:128769"/>
    </ligand>
</feature>
<feature type="binding site" evidence="1">
    <location>
        <position position="96"/>
    </location>
    <ligand>
        <name>[4Fe-4S] cluster</name>
        <dbReference type="ChEBI" id="CHEBI:49883"/>
    </ligand>
</feature>
<feature type="binding site" evidence="1">
    <location>
        <position position="124"/>
    </location>
    <ligand>
        <name>(2E)-4-hydroxy-3-methylbut-2-enyl diphosphate</name>
        <dbReference type="ChEBI" id="CHEBI:128753"/>
    </ligand>
</feature>
<feature type="binding site" evidence="1">
    <location>
        <position position="124"/>
    </location>
    <ligand>
        <name>dimethylallyl diphosphate</name>
        <dbReference type="ChEBI" id="CHEBI:57623"/>
    </ligand>
</feature>
<feature type="binding site" evidence="1">
    <location>
        <position position="124"/>
    </location>
    <ligand>
        <name>isopentenyl diphosphate</name>
        <dbReference type="ChEBI" id="CHEBI:128769"/>
    </ligand>
</feature>
<feature type="binding site" evidence="1">
    <location>
        <position position="167"/>
    </location>
    <ligand>
        <name>(2E)-4-hydroxy-3-methylbut-2-enyl diphosphate</name>
        <dbReference type="ChEBI" id="CHEBI:128753"/>
    </ligand>
</feature>
<feature type="binding site" evidence="1">
    <location>
        <position position="197"/>
    </location>
    <ligand>
        <name>[4Fe-4S] cluster</name>
        <dbReference type="ChEBI" id="CHEBI:49883"/>
    </ligand>
</feature>
<feature type="binding site" evidence="1">
    <location>
        <position position="225"/>
    </location>
    <ligand>
        <name>(2E)-4-hydroxy-3-methylbut-2-enyl diphosphate</name>
        <dbReference type="ChEBI" id="CHEBI:128753"/>
    </ligand>
</feature>
<feature type="binding site" evidence="1">
    <location>
        <position position="225"/>
    </location>
    <ligand>
        <name>dimethylallyl diphosphate</name>
        <dbReference type="ChEBI" id="CHEBI:57623"/>
    </ligand>
</feature>
<feature type="binding site" evidence="1">
    <location>
        <position position="225"/>
    </location>
    <ligand>
        <name>isopentenyl diphosphate</name>
        <dbReference type="ChEBI" id="CHEBI:128769"/>
    </ligand>
</feature>
<feature type="binding site" evidence="1">
    <location>
        <position position="226"/>
    </location>
    <ligand>
        <name>(2E)-4-hydroxy-3-methylbut-2-enyl diphosphate</name>
        <dbReference type="ChEBI" id="CHEBI:128753"/>
    </ligand>
</feature>
<feature type="binding site" evidence="1">
    <location>
        <position position="226"/>
    </location>
    <ligand>
        <name>dimethylallyl diphosphate</name>
        <dbReference type="ChEBI" id="CHEBI:57623"/>
    </ligand>
</feature>
<feature type="binding site" evidence="1">
    <location>
        <position position="226"/>
    </location>
    <ligand>
        <name>isopentenyl diphosphate</name>
        <dbReference type="ChEBI" id="CHEBI:128769"/>
    </ligand>
</feature>
<feature type="binding site" evidence="1">
    <location>
        <position position="227"/>
    </location>
    <ligand>
        <name>(2E)-4-hydroxy-3-methylbut-2-enyl diphosphate</name>
        <dbReference type="ChEBI" id="CHEBI:128753"/>
    </ligand>
</feature>
<feature type="binding site" evidence="1">
    <location>
        <position position="227"/>
    </location>
    <ligand>
        <name>dimethylallyl diphosphate</name>
        <dbReference type="ChEBI" id="CHEBI:57623"/>
    </ligand>
</feature>
<feature type="binding site" evidence="1">
    <location>
        <position position="227"/>
    </location>
    <ligand>
        <name>isopentenyl diphosphate</name>
        <dbReference type="ChEBI" id="CHEBI:128769"/>
    </ligand>
</feature>
<feature type="binding site" evidence="1">
    <location>
        <position position="269"/>
    </location>
    <ligand>
        <name>(2E)-4-hydroxy-3-methylbut-2-enyl diphosphate</name>
        <dbReference type="ChEBI" id="CHEBI:128753"/>
    </ligand>
</feature>
<feature type="binding site" evidence="1">
    <location>
        <position position="269"/>
    </location>
    <ligand>
        <name>dimethylallyl diphosphate</name>
        <dbReference type="ChEBI" id="CHEBI:57623"/>
    </ligand>
</feature>
<feature type="binding site" evidence="1">
    <location>
        <position position="269"/>
    </location>
    <ligand>
        <name>isopentenyl diphosphate</name>
        <dbReference type="ChEBI" id="CHEBI:128769"/>
    </ligand>
</feature>
<proteinExistence type="inferred from homology"/>
<comment type="function">
    <text evidence="1">Catalyzes the conversion of 1-hydroxy-2-methyl-2-(E)-butenyl 4-diphosphate (HMBPP) into a mixture of isopentenyl diphosphate (IPP) and dimethylallyl diphosphate (DMAPP). Acts in the terminal step of the DOXP/MEP pathway for isoprenoid precursor biosynthesis.</text>
</comment>
<comment type="catalytic activity">
    <reaction evidence="1">
        <text>isopentenyl diphosphate + 2 oxidized [2Fe-2S]-[ferredoxin] + H2O = (2E)-4-hydroxy-3-methylbut-2-enyl diphosphate + 2 reduced [2Fe-2S]-[ferredoxin] + 2 H(+)</text>
        <dbReference type="Rhea" id="RHEA:24488"/>
        <dbReference type="Rhea" id="RHEA-COMP:10000"/>
        <dbReference type="Rhea" id="RHEA-COMP:10001"/>
        <dbReference type="ChEBI" id="CHEBI:15377"/>
        <dbReference type="ChEBI" id="CHEBI:15378"/>
        <dbReference type="ChEBI" id="CHEBI:33737"/>
        <dbReference type="ChEBI" id="CHEBI:33738"/>
        <dbReference type="ChEBI" id="CHEBI:128753"/>
        <dbReference type="ChEBI" id="CHEBI:128769"/>
        <dbReference type="EC" id="1.17.7.4"/>
    </reaction>
</comment>
<comment type="catalytic activity">
    <reaction evidence="1">
        <text>dimethylallyl diphosphate + 2 oxidized [2Fe-2S]-[ferredoxin] + H2O = (2E)-4-hydroxy-3-methylbut-2-enyl diphosphate + 2 reduced [2Fe-2S]-[ferredoxin] + 2 H(+)</text>
        <dbReference type="Rhea" id="RHEA:24825"/>
        <dbReference type="Rhea" id="RHEA-COMP:10000"/>
        <dbReference type="Rhea" id="RHEA-COMP:10001"/>
        <dbReference type="ChEBI" id="CHEBI:15377"/>
        <dbReference type="ChEBI" id="CHEBI:15378"/>
        <dbReference type="ChEBI" id="CHEBI:33737"/>
        <dbReference type="ChEBI" id="CHEBI:33738"/>
        <dbReference type="ChEBI" id="CHEBI:57623"/>
        <dbReference type="ChEBI" id="CHEBI:128753"/>
        <dbReference type="EC" id="1.17.7.4"/>
    </reaction>
</comment>
<comment type="cofactor">
    <cofactor evidence="1">
        <name>[4Fe-4S] cluster</name>
        <dbReference type="ChEBI" id="CHEBI:49883"/>
    </cofactor>
    <text evidence="1">Binds 1 [4Fe-4S] cluster per subunit.</text>
</comment>
<comment type="pathway">
    <text evidence="1">Isoprenoid biosynthesis; dimethylallyl diphosphate biosynthesis; dimethylallyl diphosphate from (2E)-4-hydroxy-3-methylbutenyl diphosphate: step 1/1.</text>
</comment>
<comment type="pathway">
    <text evidence="1">Isoprenoid biosynthesis; isopentenyl diphosphate biosynthesis via DXP pathway; isopentenyl diphosphate from 1-deoxy-D-xylulose 5-phosphate: step 6/6.</text>
</comment>
<comment type="similarity">
    <text evidence="1">Belongs to the IspH family.</text>
</comment>
<protein>
    <recommendedName>
        <fullName evidence="1">4-hydroxy-3-methylbut-2-enyl diphosphate reductase</fullName>
        <shortName evidence="1">HMBPP reductase</shortName>
        <ecNumber evidence="1">1.17.7.4</ecNumber>
    </recommendedName>
</protein>
<dbReference type="EC" id="1.17.7.4" evidence="1"/>
<dbReference type="EMBL" id="AE017282">
    <property type="protein sequence ID" value="AAU92148.1"/>
    <property type="molecule type" value="Genomic_DNA"/>
</dbReference>
<dbReference type="RefSeq" id="WP_010961068.1">
    <property type="nucleotide sequence ID" value="NC_002977.6"/>
</dbReference>
<dbReference type="SMR" id="Q607E5"/>
<dbReference type="STRING" id="243233.MCA1815"/>
<dbReference type="GeneID" id="88224063"/>
<dbReference type="KEGG" id="mca:MCA1815"/>
<dbReference type="eggNOG" id="COG0761">
    <property type="taxonomic scope" value="Bacteria"/>
</dbReference>
<dbReference type="HOGENOM" id="CLU_027486_1_1_6"/>
<dbReference type="UniPathway" id="UPA00056">
    <property type="reaction ID" value="UER00097"/>
</dbReference>
<dbReference type="UniPathway" id="UPA00059">
    <property type="reaction ID" value="UER00105"/>
</dbReference>
<dbReference type="Proteomes" id="UP000006821">
    <property type="component" value="Chromosome"/>
</dbReference>
<dbReference type="GO" id="GO:0051539">
    <property type="term" value="F:4 iron, 4 sulfur cluster binding"/>
    <property type="evidence" value="ECO:0007669"/>
    <property type="project" value="UniProtKB-UniRule"/>
</dbReference>
<dbReference type="GO" id="GO:0051745">
    <property type="term" value="F:4-hydroxy-3-methylbut-2-enyl diphosphate reductase activity"/>
    <property type="evidence" value="ECO:0007669"/>
    <property type="project" value="UniProtKB-UniRule"/>
</dbReference>
<dbReference type="GO" id="GO:0046872">
    <property type="term" value="F:metal ion binding"/>
    <property type="evidence" value="ECO:0007669"/>
    <property type="project" value="UniProtKB-KW"/>
</dbReference>
<dbReference type="GO" id="GO:0050992">
    <property type="term" value="P:dimethylallyl diphosphate biosynthetic process"/>
    <property type="evidence" value="ECO:0007669"/>
    <property type="project" value="UniProtKB-UniRule"/>
</dbReference>
<dbReference type="GO" id="GO:0019288">
    <property type="term" value="P:isopentenyl diphosphate biosynthetic process, methylerythritol 4-phosphate pathway"/>
    <property type="evidence" value="ECO:0007669"/>
    <property type="project" value="UniProtKB-UniRule"/>
</dbReference>
<dbReference type="GO" id="GO:0016114">
    <property type="term" value="P:terpenoid biosynthetic process"/>
    <property type="evidence" value="ECO:0007669"/>
    <property type="project" value="UniProtKB-UniRule"/>
</dbReference>
<dbReference type="CDD" id="cd13944">
    <property type="entry name" value="lytB_ispH"/>
    <property type="match status" value="1"/>
</dbReference>
<dbReference type="Gene3D" id="3.40.50.11270">
    <property type="match status" value="1"/>
</dbReference>
<dbReference type="Gene3D" id="3.40.1010.20">
    <property type="entry name" value="4-hydroxy-3-methylbut-2-enyl diphosphate reductase, catalytic domain"/>
    <property type="match status" value="2"/>
</dbReference>
<dbReference type="HAMAP" id="MF_00191">
    <property type="entry name" value="IspH"/>
    <property type="match status" value="1"/>
</dbReference>
<dbReference type="InterPro" id="IPR003451">
    <property type="entry name" value="LytB/IspH"/>
</dbReference>
<dbReference type="NCBIfam" id="TIGR00216">
    <property type="entry name" value="ispH_lytB"/>
    <property type="match status" value="1"/>
</dbReference>
<dbReference type="NCBIfam" id="NF002188">
    <property type="entry name" value="PRK01045.1-2"/>
    <property type="match status" value="1"/>
</dbReference>
<dbReference type="NCBIfam" id="NF002190">
    <property type="entry name" value="PRK01045.1-4"/>
    <property type="match status" value="1"/>
</dbReference>
<dbReference type="PANTHER" id="PTHR30426">
    <property type="entry name" value="4-HYDROXY-3-METHYLBUT-2-ENYL DIPHOSPHATE REDUCTASE"/>
    <property type="match status" value="1"/>
</dbReference>
<dbReference type="PANTHER" id="PTHR30426:SF0">
    <property type="entry name" value="4-HYDROXY-3-METHYLBUT-2-ENYL DIPHOSPHATE REDUCTASE"/>
    <property type="match status" value="1"/>
</dbReference>
<dbReference type="Pfam" id="PF02401">
    <property type="entry name" value="LYTB"/>
    <property type="match status" value="1"/>
</dbReference>